<gene>
    <name evidence="1" type="primary">rpsE</name>
    <name type="ordered locus">LBA0307</name>
</gene>
<organism>
    <name type="scientific">Lactobacillus acidophilus (strain ATCC 700396 / NCK56 / N2 / NCFM)</name>
    <dbReference type="NCBI Taxonomy" id="272621"/>
    <lineage>
        <taxon>Bacteria</taxon>
        <taxon>Bacillati</taxon>
        <taxon>Bacillota</taxon>
        <taxon>Bacilli</taxon>
        <taxon>Lactobacillales</taxon>
        <taxon>Lactobacillaceae</taxon>
        <taxon>Lactobacillus</taxon>
    </lineage>
</organism>
<protein>
    <recommendedName>
        <fullName evidence="1">Small ribosomal subunit protein uS5</fullName>
    </recommendedName>
    <alternativeName>
        <fullName evidence="2">30S ribosomal protein S5</fullName>
    </alternativeName>
</protein>
<sequence>MANRNDSRNNRRNKDDIEDQLVAVNRITKVVKGGRRMRFAALVVVGDKKGRVGFGTGKAQEVPEAIRKAVEDGKKKMINVPKVGTTIPHEVIGHYGSGNILLKPAEAGSGVAAGGAVRIVMDMAGISDVTSKSLGSNTPINVVRATIDGLKKLRTSEEVSKLRQPERA</sequence>
<proteinExistence type="inferred from homology"/>
<feature type="chain" id="PRO_0000131528" description="Small ribosomal subunit protein uS5">
    <location>
        <begin position="1"/>
        <end position="168"/>
    </location>
</feature>
<feature type="domain" description="S5 DRBM" evidence="1">
    <location>
        <begin position="17"/>
        <end position="80"/>
    </location>
</feature>
<comment type="function">
    <text evidence="1">With S4 and S12 plays an important role in translational accuracy.</text>
</comment>
<comment type="function">
    <text evidence="1">Located at the back of the 30S subunit body where it stabilizes the conformation of the head with respect to the body.</text>
</comment>
<comment type="subunit">
    <text evidence="1">Part of the 30S ribosomal subunit. Contacts proteins S4 and S8.</text>
</comment>
<comment type="domain">
    <text>The N-terminal domain interacts with the head of the 30S subunit; the C-terminal domain interacts with the body and contacts protein S4. The interaction surface between S4 and S5 is involved in control of translational fidelity.</text>
</comment>
<comment type="similarity">
    <text evidence="1">Belongs to the universal ribosomal protein uS5 family.</text>
</comment>
<reference key="1">
    <citation type="journal article" date="2005" name="Proc. Natl. Acad. Sci. U.S.A.">
        <title>Complete genome sequence of the probiotic lactic acid bacterium Lactobacillus acidophilus NCFM.</title>
        <authorList>
            <person name="Altermann E."/>
            <person name="Russell W.M."/>
            <person name="Azcarate-Peril M.A."/>
            <person name="Barrangou R."/>
            <person name="Buck B.L."/>
            <person name="McAuliffe O."/>
            <person name="Souther N."/>
            <person name="Dobson A."/>
            <person name="Duong T."/>
            <person name="Callanan M."/>
            <person name="Lick S."/>
            <person name="Hamrick A."/>
            <person name="Cano R."/>
            <person name="Klaenhammer T.R."/>
        </authorList>
    </citation>
    <scope>NUCLEOTIDE SEQUENCE [LARGE SCALE GENOMIC DNA]</scope>
    <source>
        <strain>ATCC 700396 / NCK56 / N2 / NCFM</strain>
    </source>
</reference>
<dbReference type="EMBL" id="CP000033">
    <property type="protein sequence ID" value="AAV42200.1"/>
    <property type="molecule type" value="Genomic_DNA"/>
</dbReference>
<dbReference type="RefSeq" id="WP_003549041.1">
    <property type="nucleotide sequence ID" value="NC_006814.3"/>
</dbReference>
<dbReference type="RefSeq" id="YP_193231.1">
    <property type="nucleotide sequence ID" value="NC_006814.3"/>
</dbReference>
<dbReference type="SMR" id="Q5FM74"/>
<dbReference type="STRING" id="272621.LBA0307"/>
<dbReference type="GeneID" id="93290584"/>
<dbReference type="KEGG" id="lac:LBA0307"/>
<dbReference type="PATRIC" id="fig|272621.13.peg.294"/>
<dbReference type="eggNOG" id="COG0098">
    <property type="taxonomic scope" value="Bacteria"/>
</dbReference>
<dbReference type="HOGENOM" id="CLU_065898_2_2_9"/>
<dbReference type="OrthoDB" id="9809045at2"/>
<dbReference type="BioCyc" id="LACI272621:G1G49-302-MONOMER"/>
<dbReference type="Proteomes" id="UP000006381">
    <property type="component" value="Chromosome"/>
</dbReference>
<dbReference type="GO" id="GO:0015935">
    <property type="term" value="C:small ribosomal subunit"/>
    <property type="evidence" value="ECO:0007669"/>
    <property type="project" value="InterPro"/>
</dbReference>
<dbReference type="GO" id="GO:0019843">
    <property type="term" value="F:rRNA binding"/>
    <property type="evidence" value="ECO:0007669"/>
    <property type="project" value="UniProtKB-UniRule"/>
</dbReference>
<dbReference type="GO" id="GO:0003735">
    <property type="term" value="F:structural constituent of ribosome"/>
    <property type="evidence" value="ECO:0007669"/>
    <property type="project" value="InterPro"/>
</dbReference>
<dbReference type="GO" id="GO:0006412">
    <property type="term" value="P:translation"/>
    <property type="evidence" value="ECO:0007669"/>
    <property type="project" value="UniProtKB-UniRule"/>
</dbReference>
<dbReference type="FunFam" id="3.30.160.20:FF:000001">
    <property type="entry name" value="30S ribosomal protein S5"/>
    <property type="match status" value="1"/>
</dbReference>
<dbReference type="FunFam" id="3.30.230.10:FF:000002">
    <property type="entry name" value="30S ribosomal protein S5"/>
    <property type="match status" value="1"/>
</dbReference>
<dbReference type="Gene3D" id="3.30.160.20">
    <property type="match status" value="1"/>
</dbReference>
<dbReference type="Gene3D" id="3.30.230.10">
    <property type="match status" value="1"/>
</dbReference>
<dbReference type="HAMAP" id="MF_01307_B">
    <property type="entry name" value="Ribosomal_uS5_B"/>
    <property type="match status" value="1"/>
</dbReference>
<dbReference type="InterPro" id="IPR020568">
    <property type="entry name" value="Ribosomal_Su5_D2-typ_SF"/>
</dbReference>
<dbReference type="InterPro" id="IPR000851">
    <property type="entry name" value="Ribosomal_uS5"/>
</dbReference>
<dbReference type="InterPro" id="IPR005712">
    <property type="entry name" value="Ribosomal_uS5_bac-type"/>
</dbReference>
<dbReference type="InterPro" id="IPR005324">
    <property type="entry name" value="Ribosomal_uS5_C"/>
</dbReference>
<dbReference type="InterPro" id="IPR013810">
    <property type="entry name" value="Ribosomal_uS5_N"/>
</dbReference>
<dbReference type="InterPro" id="IPR018192">
    <property type="entry name" value="Ribosomal_uS5_N_CS"/>
</dbReference>
<dbReference type="InterPro" id="IPR014721">
    <property type="entry name" value="Ribsml_uS5_D2-typ_fold_subgr"/>
</dbReference>
<dbReference type="NCBIfam" id="TIGR01021">
    <property type="entry name" value="rpsE_bact"/>
    <property type="match status" value="1"/>
</dbReference>
<dbReference type="PANTHER" id="PTHR48277">
    <property type="entry name" value="MITOCHONDRIAL RIBOSOMAL PROTEIN S5"/>
    <property type="match status" value="1"/>
</dbReference>
<dbReference type="PANTHER" id="PTHR48277:SF1">
    <property type="entry name" value="MITOCHONDRIAL RIBOSOMAL PROTEIN S5"/>
    <property type="match status" value="1"/>
</dbReference>
<dbReference type="Pfam" id="PF00333">
    <property type="entry name" value="Ribosomal_S5"/>
    <property type="match status" value="1"/>
</dbReference>
<dbReference type="Pfam" id="PF03719">
    <property type="entry name" value="Ribosomal_S5_C"/>
    <property type="match status" value="1"/>
</dbReference>
<dbReference type="SUPFAM" id="SSF54768">
    <property type="entry name" value="dsRNA-binding domain-like"/>
    <property type="match status" value="1"/>
</dbReference>
<dbReference type="SUPFAM" id="SSF54211">
    <property type="entry name" value="Ribosomal protein S5 domain 2-like"/>
    <property type="match status" value="1"/>
</dbReference>
<dbReference type="PROSITE" id="PS00585">
    <property type="entry name" value="RIBOSOMAL_S5"/>
    <property type="match status" value="1"/>
</dbReference>
<dbReference type="PROSITE" id="PS50881">
    <property type="entry name" value="S5_DSRBD"/>
    <property type="match status" value="1"/>
</dbReference>
<name>RS5_LACAC</name>
<evidence type="ECO:0000255" key="1">
    <source>
        <dbReference type="HAMAP-Rule" id="MF_01307"/>
    </source>
</evidence>
<evidence type="ECO:0000305" key="2"/>
<accession>Q5FM74</accession>
<keyword id="KW-1185">Reference proteome</keyword>
<keyword id="KW-0687">Ribonucleoprotein</keyword>
<keyword id="KW-0689">Ribosomal protein</keyword>
<keyword id="KW-0694">RNA-binding</keyword>
<keyword id="KW-0699">rRNA-binding</keyword>